<keyword id="KW-0687">Ribonucleoprotein</keyword>
<keyword id="KW-0689">Ribosomal protein</keyword>
<keyword id="KW-0694">RNA-binding</keyword>
<keyword id="KW-0699">rRNA-binding</keyword>
<name>RS18_STRS2</name>
<protein>
    <recommendedName>
        <fullName evidence="1">Small ribosomal subunit protein bS18</fullName>
    </recommendedName>
    <alternativeName>
        <fullName evidence="2">30S ribosomal protein S18</fullName>
    </alternativeName>
</protein>
<gene>
    <name evidence="1" type="primary">rpsR</name>
    <name type="ordered locus">SSU98_1831</name>
</gene>
<sequence length="79" mass="9200">MAQQRRGGFKRRKKVDYIAANKIEYVDYKDTELLSRFISERGKILPRRVTGTSAKNQRKVTTAIKRARVMALLPFVNED</sequence>
<comment type="function">
    <text evidence="1">Binds as a heterodimer with protein bS6 to the central domain of the 16S rRNA, where it helps stabilize the platform of the 30S subunit.</text>
</comment>
<comment type="subunit">
    <text evidence="1">Part of the 30S ribosomal subunit. Forms a tight heterodimer with protein bS6.</text>
</comment>
<comment type="similarity">
    <text evidence="1">Belongs to the bacterial ribosomal protein bS18 family.</text>
</comment>
<proteinExistence type="inferred from homology"/>
<accession>A4W3Q0</accession>
<organism>
    <name type="scientific">Streptococcus suis (strain 98HAH33)</name>
    <dbReference type="NCBI Taxonomy" id="391296"/>
    <lineage>
        <taxon>Bacteria</taxon>
        <taxon>Bacillati</taxon>
        <taxon>Bacillota</taxon>
        <taxon>Bacilli</taxon>
        <taxon>Lactobacillales</taxon>
        <taxon>Streptococcaceae</taxon>
        <taxon>Streptococcus</taxon>
    </lineage>
</organism>
<dbReference type="EMBL" id="CP000408">
    <property type="protein sequence ID" value="ABP92989.1"/>
    <property type="molecule type" value="Genomic_DNA"/>
</dbReference>
<dbReference type="SMR" id="A4W3Q0"/>
<dbReference type="KEGG" id="ssv:SSU98_1831"/>
<dbReference type="HOGENOM" id="CLU_148710_2_2_9"/>
<dbReference type="GO" id="GO:0022627">
    <property type="term" value="C:cytosolic small ribosomal subunit"/>
    <property type="evidence" value="ECO:0007669"/>
    <property type="project" value="TreeGrafter"/>
</dbReference>
<dbReference type="GO" id="GO:0070181">
    <property type="term" value="F:small ribosomal subunit rRNA binding"/>
    <property type="evidence" value="ECO:0007669"/>
    <property type="project" value="TreeGrafter"/>
</dbReference>
<dbReference type="GO" id="GO:0003735">
    <property type="term" value="F:structural constituent of ribosome"/>
    <property type="evidence" value="ECO:0007669"/>
    <property type="project" value="InterPro"/>
</dbReference>
<dbReference type="GO" id="GO:0006412">
    <property type="term" value="P:translation"/>
    <property type="evidence" value="ECO:0007669"/>
    <property type="project" value="UniProtKB-UniRule"/>
</dbReference>
<dbReference type="FunFam" id="4.10.640.10:FF:000003">
    <property type="entry name" value="30S ribosomal protein S18"/>
    <property type="match status" value="1"/>
</dbReference>
<dbReference type="Gene3D" id="4.10.640.10">
    <property type="entry name" value="Ribosomal protein S18"/>
    <property type="match status" value="1"/>
</dbReference>
<dbReference type="HAMAP" id="MF_00270">
    <property type="entry name" value="Ribosomal_bS18"/>
    <property type="match status" value="1"/>
</dbReference>
<dbReference type="InterPro" id="IPR001648">
    <property type="entry name" value="Ribosomal_bS18"/>
</dbReference>
<dbReference type="InterPro" id="IPR018275">
    <property type="entry name" value="Ribosomal_bS18_CS"/>
</dbReference>
<dbReference type="InterPro" id="IPR036870">
    <property type="entry name" value="Ribosomal_bS18_sf"/>
</dbReference>
<dbReference type="NCBIfam" id="TIGR00165">
    <property type="entry name" value="S18"/>
    <property type="match status" value="1"/>
</dbReference>
<dbReference type="PANTHER" id="PTHR13479">
    <property type="entry name" value="30S RIBOSOMAL PROTEIN S18"/>
    <property type="match status" value="1"/>
</dbReference>
<dbReference type="PANTHER" id="PTHR13479:SF40">
    <property type="entry name" value="SMALL RIBOSOMAL SUBUNIT PROTEIN BS18M"/>
    <property type="match status" value="1"/>
</dbReference>
<dbReference type="Pfam" id="PF01084">
    <property type="entry name" value="Ribosomal_S18"/>
    <property type="match status" value="1"/>
</dbReference>
<dbReference type="PRINTS" id="PR00974">
    <property type="entry name" value="RIBOSOMALS18"/>
</dbReference>
<dbReference type="SUPFAM" id="SSF46911">
    <property type="entry name" value="Ribosomal protein S18"/>
    <property type="match status" value="1"/>
</dbReference>
<dbReference type="PROSITE" id="PS00057">
    <property type="entry name" value="RIBOSOMAL_S18"/>
    <property type="match status" value="1"/>
</dbReference>
<reference key="1">
    <citation type="journal article" date="2007" name="PLoS ONE">
        <title>A glimpse of streptococcal toxic shock syndrome from comparative genomics of S. suis 2 Chinese isolates.</title>
        <authorList>
            <person name="Chen C."/>
            <person name="Tang J."/>
            <person name="Dong W."/>
            <person name="Wang C."/>
            <person name="Feng Y."/>
            <person name="Wang J."/>
            <person name="Zheng F."/>
            <person name="Pan X."/>
            <person name="Liu D."/>
            <person name="Li M."/>
            <person name="Song Y."/>
            <person name="Zhu X."/>
            <person name="Sun H."/>
            <person name="Feng T."/>
            <person name="Guo Z."/>
            <person name="Ju A."/>
            <person name="Ge J."/>
            <person name="Dong Y."/>
            <person name="Sun W."/>
            <person name="Jiang Y."/>
            <person name="Wang J."/>
            <person name="Yan J."/>
            <person name="Yang H."/>
            <person name="Wang X."/>
            <person name="Gao G.F."/>
            <person name="Yang R."/>
            <person name="Wang J."/>
            <person name="Yu J."/>
        </authorList>
    </citation>
    <scope>NUCLEOTIDE SEQUENCE [LARGE SCALE GENOMIC DNA]</scope>
    <source>
        <strain>98HAH33</strain>
    </source>
</reference>
<feature type="chain" id="PRO_1000003632" description="Small ribosomal subunit protein bS18">
    <location>
        <begin position="1"/>
        <end position="79"/>
    </location>
</feature>
<evidence type="ECO:0000255" key="1">
    <source>
        <dbReference type="HAMAP-Rule" id="MF_00270"/>
    </source>
</evidence>
<evidence type="ECO:0000305" key="2"/>